<evidence type="ECO:0000255" key="1">
    <source>
        <dbReference type="PROSITE-ProRule" id="PRU00703"/>
    </source>
</evidence>
<keyword id="KW-0129">CBS domain</keyword>
<keyword id="KW-0677">Repeat</keyword>
<reference key="1">
    <citation type="submission" date="1992-01" db="EMBL/GenBank/DDBJ databases">
        <authorList>
            <person name="Kletzin A."/>
        </authorList>
    </citation>
    <scope>NUCLEOTIDE SEQUENCE [GENOMIC DNA]</scope>
    <source>
        <strain>Lei 10 / DSM 3772 / JCM 9191</strain>
    </source>
</reference>
<dbReference type="EMBL" id="X64202">
    <property type="protein sequence ID" value="CAA45529.1"/>
    <property type="molecule type" value="Genomic_DNA"/>
</dbReference>
<dbReference type="PIR" id="S22196">
    <property type="entry name" value="S22196"/>
</dbReference>
<dbReference type="RefSeq" id="WP_152941811.1">
    <property type="nucleotide sequence ID" value="NZ_CP045482.1"/>
</dbReference>
<dbReference type="SMR" id="P32987"/>
<dbReference type="GeneID" id="42779393"/>
<dbReference type="CDD" id="cd09836">
    <property type="entry name" value="CBS_pair_arch"/>
    <property type="match status" value="1"/>
</dbReference>
<dbReference type="Gene3D" id="3.10.580.10">
    <property type="entry name" value="CBS-domain"/>
    <property type="match status" value="1"/>
</dbReference>
<dbReference type="InterPro" id="IPR000644">
    <property type="entry name" value="CBS_dom"/>
</dbReference>
<dbReference type="InterPro" id="IPR046342">
    <property type="entry name" value="CBS_dom_sf"/>
</dbReference>
<dbReference type="InterPro" id="IPR051257">
    <property type="entry name" value="Diverse_CBS-Domain"/>
</dbReference>
<dbReference type="PANTHER" id="PTHR43080:SF2">
    <property type="entry name" value="CBS DOMAIN-CONTAINING PROTEIN"/>
    <property type="match status" value="1"/>
</dbReference>
<dbReference type="PANTHER" id="PTHR43080">
    <property type="entry name" value="CBS DOMAIN-CONTAINING PROTEIN CBSX3, MITOCHONDRIAL"/>
    <property type="match status" value="1"/>
</dbReference>
<dbReference type="Pfam" id="PF00571">
    <property type="entry name" value="CBS"/>
    <property type="match status" value="2"/>
</dbReference>
<dbReference type="SMART" id="SM00116">
    <property type="entry name" value="CBS"/>
    <property type="match status" value="2"/>
</dbReference>
<dbReference type="SUPFAM" id="SSF54631">
    <property type="entry name" value="CBS-domain pair"/>
    <property type="match status" value="1"/>
</dbReference>
<dbReference type="PROSITE" id="PS51371">
    <property type="entry name" value="CBS"/>
    <property type="match status" value="2"/>
</dbReference>
<name>YBP3_ACIAM</name>
<proteinExistence type="predicted"/>
<sequence>MATKVSQIATTKVYVVKPNVTIAEAAKEMKEHNLGSLVVIDSQNRVVGIITERDIVKAASNRDIDSPVEKYMTKDVKGVTEDTEVTDALDIMLNNGFRHLPIIKSNGKLYGIVSIRDLARALLDVHTMQFGKPAEEVKGTGVICPVCGMEIDEYGYCGCGTGSG</sequence>
<accession>P32987</accession>
<feature type="chain" id="PRO_0000066152" description="Uncharacterized 17.7 kDa protein in bps2 3'region">
    <location>
        <begin position="1"/>
        <end position="164"/>
    </location>
</feature>
<feature type="domain" description="CBS 1" evidence="1">
    <location>
        <begin position="9"/>
        <end position="66"/>
    </location>
</feature>
<feature type="domain" description="CBS 2" evidence="1">
    <location>
        <begin position="72"/>
        <end position="128"/>
    </location>
</feature>
<protein>
    <recommendedName>
        <fullName>Uncharacterized 17.7 kDa protein in bps2 3'region</fullName>
    </recommendedName>
    <alternativeName>
        <fullName>ORF3</fullName>
    </alternativeName>
</protein>
<organism>
    <name type="scientific">Acidianus ambivalens</name>
    <name type="common">Desulfurolobus ambivalens</name>
    <dbReference type="NCBI Taxonomy" id="2283"/>
    <lineage>
        <taxon>Archaea</taxon>
        <taxon>Thermoproteota</taxon>
        <taxon>Thermoprotei</taxon>
        <taxon>Sulfolobales</taxon>
        <taxon>Sulfolobaceae</taxon>
        <taxon>Acidianus</taxon>
    </lineage>
</organism>